<dbReference type="EC" id="1.17.1.8" evidence="1"/>
<dbReference type="EMBL" id="CP000031">
    <property type="protein sequence ID" value="AAV97048.1"/>
    <property type="molecule type" value="Genomic_DNA"/>
</dbReference>
<dbReference type="RefSeq" id="WP_011049505.1">
    <property type="nucleotide sequence ID" value="NC_003911.12"/>
</dbReference>
<dbReference type="SMR" id="Q5LLT7"/>
<dbReference type="STRING" id="246200.SPO3834"/>
<dbReference type="PaxDb" id="246200-SPO3834"/>
<dbReference type="KEGG" id="sil:SPO3834"/>
<dbReference type="eggNOG" id="COG0289">
    <property type="taxonomic scope" value="Bacteria"/>
</dbReference>
<dbReference type="HOGENOM" id="CLU_047479_2_1_5"/>
<dbReference type="OrthoDB" id="9790352at2"/>
<dbReference type="UniPathway" id="UPA00034">
    <property type="reaction ID" value="UER00018"/>
</dbReference>
<dbReference type="Proteomes" id="UP000001023">
    <property type="component" value="Chromosome"/>
</dbReference>
<dbReference type="GO" id="GO:0005829">
    <property type="term" value="C:cytosol"/>
    <property type="evidence" value="ECO:0007669"/>
    <property type="project" value="TreeGrafter"/>
</dbReference>
<dbReference type="GO" id="GO:0008839">
    <property type="term" value="F:4-hydroxy-tetrahydrodipicolinate reductase"/>
    <property type="evidence" value="ECO:0007669"/>
    <property type="project" value="UniProtKB-EC"/>
</dbReference>
<dbReference type="GO" id="GO:0051287">
    <property type="term" value="F:NAD binding"/>
    <property type="evidence" value="ECO:0007669"/>
    <property type="project" value="UniProtKB-UniRule"/>
</dbReference>
<dbReference type="GO" id="GO:0050661">
    <property type="term" value="F:NADP binding"/>
    <property type="evidence" value="ECO:0007669"/>
    <property type="project" value="UniProtKB-UniRule"/>
</dbReference>
<dbReference type="GO" id="GO:0016726">
    <property type="term" value="F:oxidoreductase activity, acting on CH or CH2 groups, NAD or NADP as acceptor"/>
    <property type="evidence" value="ECO:0007669"/>
    <property type="project" value="UniProtKB-UniRule"/>
</dbReference>
<dbReference type="GO" id="GO:0019877">
    <property type="term" value="P:diaminopimelate biosynthetic process"/>
    <property type="evidence" value="ECO:0007669"/>
    <property type="project" value="UniProtKB-UniRule"/>
</dbReference>
<dbReference type="GO" id="GO:0009089">
    <property type="term" value="P:lysine biosynthetic process via diaminopimelate"/>
    <property type="evidence" value="ECO:0007669"/>
    <property type="project" value="UniProtKB-UniRule"/>
</dbReference>
<dbReference type="CDD" id="cd02274">
    <property type="entry name" value="DHDPR_N"/>
    <property type="match status" value="1"/>
</dbReference>
<dbReference type="FunFam" id="3.30.360.10:FF:000004">
    <property type="entry name" value="4-hydroxy-tetrahydrodipicolinate reductase"/>
    <property type="match status" value="1"/>
</dbReference>
<dbReference type="Gene3D" id="3.30.360.10">
    <property type="entry name" value="Dihydrodipicolinate Reductase, domain 2"/>
    <property type="match status" value="1"/>
</dbReference>
<dbReference type="Gene3D" id="3.40.50.720">
    <property type="entry name" value="NAD(P)-binding Rossmann-like Domain"/>
    <property type="match status" value="1"/>
</dbReference>
<dbReference type="HAMAP" id="MF_00102">
    <property type="entry name" value="DapB"/>
    <property type="match status" value="1"/>
</dbReference>
<dbReference type="InterPro" id="IPR022663">
    <property type="entry name" value="DapB_C"/>
</dbReference>
<dbReference type="InterPro" id="IPR000846">
    <property type="entry name" value="DapB_N"/>
</dbReference>
<dbReference type="InterPro" id="IPR022664">
    <property type="entry name" value="DapB_N_CS"/>
</dbReference>
<dbReference type="InterPro" id="IPR023940">
    <property type="entry name" value="DHDPR_bac"/>
</dbReference>
<dbReference type="InterPro" id="IPR036291">
    <property type="entry name" value="NAD(P)-bd_dom_sf"/>
</dbReference>
<dbReference type="NCBIfam" id="TIGR00036">
    <property type="entry name" value="dapB"/>
    <property type="match status" value="1"/>
</dbReference>
<dbReference type="PANTHER" id="PTHR20836:SF0">
    <property type="entry name" value="4-HYDROXY-TETRAHYDRODIPICOLINATE REDUCTASE 1, CHLOROPLASTIC-RELATED"/>
    <property type="match status" value="1"/>
</dbReference>
<dbReference type="PANTHER" id="PTHR20836">
    <property type="entry name" value="DIHYDRODIPICOLINATE REDUCTASE"/>
    <property type="match status" value="1"/>
</dbReference>
<dbReference type="Pfam" id="PF05173">
    <property type="entry name" value="DapB_C"/>
    <property type="match status" value="1"/>
</dbReference>
<dbReference type="Pfam" id="PF01113">
    <property type="entry name" value="DapB_N"/>
    <property type="match status" value="1"/>
</dbReference>
<dbReference type="PIRSF" id="PIRSF000161">
    <property type="entry name" value="DHPR"/>
    <property type="match status" value="1"/>
</dbReference>
<dbReference type="SUPFAM" id="SSF55347">
    <property type="entry name" value="Glyceraldehyde-3-phosphate dehydrogenase-like, C-terminal domain"/>
    <property type="match status" value="1"/>
</dbReference>
<dbReference type="SUPFAM" id="SSF51735">
    <property type="entry name" value="NAD(P)-binding Rossmann-fold domains"/>
    <property type="match status" value="1"/>
</dbReference>
<dbReference type="PROSITE" id="PS01298">
    <property type="entry name" value="DAPB"/>
    <property type="match status" value="1"/>
</dbReference>
<accession>Q5LLT7</accession>
<feature type="chain" id="PRO_0000228389" description="4-hydroxy-tetrahydrodipicolinate reductase">
    <location>
        <begin position="1"/>
        <end position="269"/>
    </location>
</feature>
<feature type="active site" description="Proton donor/acceptor" evidence="1">
    <location>
        <position position="158"/>
    </location>
</feature>
<feature type="active site" description="Proton donor" evidence="1">
    <location>
        <position position="162"/>
    </location>
</feature>
<feature type="binding site" evidence="1">
    <location>
        <begin position="11"/>
        <end position="16"/>
    </location>
    <ligand>
        <name>NAD(+)</name>
        <dbReference type="ChEBI" id="CHEBI:57540"/>
    </ligand>
</feature>
<feature type="binding site" evidence="1">
    <location>
        <position position="37"/>
    </location>
    <ligand>
        <name>NAD(+)</name>
        <dbReference type="ChEBI" id="CHEBI:57540"/>
    </ligand>
</feature>
<feature type="binding site" evidence="1">
    <location>
        <position position="38"/>
    </location>
    <ligand>
        <name>NADP(+)</name>
        <dbReference type="ChEBI" id="CHEBI:58349"/>
    </ligand>
</feature>
<feature type="binding site" evidence="1">
    <location>
        <begin position="101"/>
        <end position="103"/>
    </location>
    <ligand>
        <name>NAD(+)</name>
        <dbReference type="ChEBI" id="CHEBI:57540"/>
    </ligand>
</feature>
<feature type="binding site" evidence="1">
    <location>
        <begin position="125"/>
        <end position="128"/>
    </location>
    <ligand>
        <name>NAD(+)</name>
        <dbReference type="ChEBI" id="CHEBI:57540"/>
    </ligand>
</feature>
<feature type="binding site" evidence="1">
    <location>
        <position position="159"/>
    </location>
    <ligand>
        <name>(S)-2,3,4,5-tetrahydrodipicolinate</name>
        <dbReference type="ChEBI" id="CHEBI:16845"/>
    </ligand>
</feature>
<feature type="binding site" evidence="1">
    <location>
        <begin position="168"/>
        <end position="169"/>
    </location>
    <ligand>
        <name>(S)-2,3,4,5-tetrahydrodipicolinate</name>
        <dbReference type="ChEBI" id="CHEBI:16845"/>
    </ligand>
</feature>
<evidence type="ECO:0000255" key="1">
    <source>
        <dbReference type="HAMAP-Rule" id="MF_00102"/>
    </source>
</evidence>
<evidence type="ECO:0000305" key="2"/>
<gene>
    <name evidence="1" type="primary">dapB</name>
    <name type="ordered locus">SPO3834</name>
</gene>
<proteinExistence type="inferred from homology"/>
<reference key="1">
    <citation type="journal article" date="2004" name="Nature">
        <title>Genome sequence of Silicibacter pomeroyi reveals adaptations to the marine environment.</title>
        <authorList>
            <person name="Moran M.A."/>
            <person name="Buchan A."/>
            <person name="Gonzalez J.M."/>
            <person name="Heidelberg J.F."/>
            <person name="Whitman W.B."/>
            <person name="Kiene R.P."/>
            <person name="Henriksen J.R."/>
            <person name="King G.M."/>
            <person name="Belas R."/>
            <person name="Fuqua C."/>
            <person name="Brinkac L.M."/>
            <person name="Lewis M."/>
            <person name="Johri S."/>
            <person name="Weaver B."/>
            <person name="Pai G."/>
            <person name="Eisen J.A."/>
            <person name="Rahe E."/>
            <person name="Sheldon W.M."/>
            <person name="Ye W."/>
            <person name="Miller T.R."/>
            <person name="Carlton J."/>
            <person name="Rasko D.A."/>
            <person name="Paulsen I.T."/>
            <person name="Ren Q."/>
            <person name="Daugherty S.C."/>
            <person name="DeBoy R.T."/>
            <person name="Dodson R.J."/>
            <person name="Durkin A.S."/>
            <person name="Madupu R."/>
            <person name="Nelson W.C."/>
            <person name="Sullivan S.A."/>
            <person name="Rosovitz M.J."/>
            <person name="Haft D.H."/>
            <person name="Selengut J."/>
            <person name="Ward N."/>
        </authorList>
    </citation>
    <scope>NUCLEOTIDE SEQUENCE [LARGE SCALE GENOMIC DNA]</scope>
    <source>
        <strain>ATCC 700808 / DSM 15171 / DSS-3</strain>
    </source>
</reference>
<reference key="2">
    <citation type="journal article" date="2014" name="Stand. Genomic Sci.">
        <title>An updated genome annotation for the model marine bacterium Ruegeria pomeroyi DSS-3.</title>
        <authorList>
            <person name="Rivers A.R."/>
            <person name="Smith C.B."/>
            <person name="Moran M.A."/>
        </authorList>
    </citation>
    <scope>GENOME REANNOTATION</scope>
    <source>
        <strain>ATCC 700808 / DSM 15171 / DSS-3</strain>
    </source>
</reference>
<comment type="function">
    <text evidence="1">Catalyzes the conversion of 4-hydroxy-tetrahydrodipicolinate (HTPA) to tetrahydrodipicolinate.</text>
</comment>
<comment type="catalytic activity">
    <reaction evidence="1">
        <text>(S)-2,3,4,5-tetrahydrodipicolinate + NAD(+) + H2O = (2S,4S)-4-hydroxy-2,3,4,5-tetrahydrodipicolinate + NADH + H(+)</text>
        <dbReference type="Rhea" id="RHEA:35323"/>
        <dbReference type="ChEBI" id="CHEBI:15377"/>
        <dbReference type="ChEBI" id="CHEBI:15378"/>
        <dbReference type="ChEBI" id="CHEBI:16845"/>
        <dbReference type="ChEBI" id="CHEBI:57540"/>
        <dbReference type="ChEBI" id="CHEBI:57945"/>
        <dbReference type="ChEBI" id="CHEBI:67139"/>
        <dbReference type="EC" id="1.17.1.8"/>
    </reaction>
</comment>
<comment type="catalytic activity">
    <reaction evidence="1">
        <text>(S)-2,3,4,5-tetrahydrodipicolinate + NADP(+) + H2O = (2S,4S)-4-hydroxy-2,3,4,5-tetrahydrodipicolinate + NADPH + H(+)</text>
        <dbReference type="Rhea" id="RHEA:35331"/>
        <dbReference type="ChEBI" id="CHEBI:15377"/>
        <dbReference type="ChEBI" id="CHEBI:15378"/>
        <dbReference type="ChEBI" id="CHEBI:16845"/>
        <dbReference type="ChEBI" id="CHEBI:57783"/>
        <dbReference type="ChEBI" id="CHEBI:58349"/>
        <dbReference type="ChEBI" id="CHEBI:67139"/>
        <dbReference type="EC" id="1.17.1.8"/>
    </reaction>
</comment>
<comment type="pathway">
    <text evidence="1">Amino-acid biosynthesis; L-lysine biosynthesis via DAP pathway; (S)-tetrahydrodipicolinate from L-aspartate: step 4/4.</text>
</comment>
<comment type="subcellular location">
    <subcellularLocation>
        <location evidence="1">Cytoplasm</location>
    </subcellularLocation>
</comment>
<comment type="similarity">
    <text evidence="1">Belongs to the DapB family.</text>
</comment>
<comment type="caution">
    <text evidence="2">Was originally thought to be a dihydrodipicolinate reductase (DHDPR), catalyzing the conversion of dihydrodipicolinate to tetrahydrodipicolinate. However, it was shown in E.coli that the substrate of the enzymatic reaction is not dihydrodipicolinate (DHDP) but in fact (2S,4S)-4-hydroxy-2,3,4,5-tetrahydrodipicolinic acid (HTPA), the product released by the DapA-catalyzed reaction.</text>
</comment>
<protein>
    <recommendedName>
        <fullName evidence="1">4-hydroxy-tetrahydrodipicolinate reductase</fullName>
        <shortName evidence="1">HTPA reductase</shortName>
        <ecNumber evidence="1">1.17.1.8</ecNumber>
    </recommendedName>
</protein>
<organism>
    <name type="scientific">Ruegeria pomeroyi (strain ATCC 700808 / DSM 15171 / DSS-3)</name>
    <name type="common">Silicibacter pomeroyi</name>
    <dbReference type="NCBI Taxonomy" id="246200"/>
    <lineage>
        <taxon>Bacteria</taxon>
        <taxon>Pseudomonadati</taxon>
        <taxon>Pseudomonadota</taxon>
        <taxon>Alphaproteobacteria</taxon>
        <taxon>Rhodobacterales</taxon>
        <taxon>Roseobacteraceae</taxon>
        <taxon>Ruegeria</taxon>
    </lineage>
</organism>
<keyword id="KW-0028">Amino-acid biosynthesis</keyword>
<keyword id="KW-0963">Cytoplasm</keyword>
<keyword id="KW-0220">Diaminopimelate biosynthesis</keyword>
<keyword id="KW-0457">Lysine biosynthesis</keyword>
<keyword id="KW-0520">NAD</keyword>
<keyword id="KW-0521">NADP</keyword>
<keyword id="KW-0560">Oxidoreductase</keyword>
<keyword id="KW-1185">Reference proteome</keyword>
<name>DAPB_RUEPO</name>
<sequence>MTHIPGIVITGASGRMGQMLVRTVTDSDKVRLVGALERPGHDWIGRDVGEAMGGQALGVAVTDDPLEAFAQAQAVIDFTAPAATLGFAALAAQARCVHVIGTTGMTAEQIAALEPAARHAVIVRAGNMSLGVNLLVQLTKKVAAALDEDFDIEVIEAHHHHKVDAPSGTALMLGEAAAEGRGVRLDDVADRARDGITGARTRGDIGFHAIRGGDIVGEHDVLFAAPGERIVLRHVASDRAVFARGALKAALWGQGKAPGHYDMVDVLGL</sequence>